<keyword id="KW-0025">Alternative splicing</keyword>
<keyword id="KW-0963">Cytoplasm</keyword>
<keyword id="KW-0206">Cytoskeleton</keyword>
<keyword id="KW-0342">GTP-binding</keyword>
<keyword id="KW-0460">Magnesium</keyword>
<keyword id="KW-0479">Metal-binding</keyword>
<keyword id="KW-0493">Microtubule</keyword>
<keyword id="KW-0547">Nucleotide-binding</keyword>
<keyword id="KW-1185">Reference proteome</keyword>
<comment type="function">
    <text>Tubulin is the major constituent of microtubules, a cylinder consisting of laterally associated linear protofilaments composed of alpha- and beta-tubulin heterodimers. Microtubules grow by the addition of GTP-tubulin dimers to the microtubule end, where a stabilizing cap forms. Below the cap, tubulin dimers are in GDP-bound state, owing to GTPase activity of alpha-tubulin.</text>
</comment>
<comment type="cofactor">
    <cofactor evidence="1">
        <name>Mg(2+)</name>
        <dbReference type="ChEBI" id="CHEBI:18420"/>
    </cofactor>
</comment>
<comment type="subunit">
    <text>Dimer of alpha and beta chains. A typical microtubule is a hollow water-filled tube with an outer diameter of 25 nm and an inner diameter of 15 nM. Alpha-beta heterodimers associate head-to-tail to form protofilaments running lengthwise along the microtubule wall with the beta-tubulin subunit facing the microtubule plus end conferring a structural polarity. Microtubules usually have 13 protofilaments but different protofilament numbers can be found in some organisms and specialized cells.</text>
</comment>
<comment type="subcellular location">
    <subcellularLocation>
        <location>Cytoplasm</location>
        <location>Cytoskeleton</location>
    </subcellularLocation>
</comment>
<comment type="alternative products">
    <event type="alternative splicing"/>
    <isoform>
        <id>Q40665-1</id>
        <name>1</name>
        <sequence type="displayed"/>
    </isoform>
    <isoform>
        <id>Q40665-2</id>
        <name>2</name>
        <sequence type="described" ref="VSP_015369"/>
    </isoform>
</comment>
<comment type="tissue specificity">
    <text evidence="4">Expressed in roots, second node, leaf sheaths, and suspension cultured cells.</text>
</comment>
<comment type="developmental stage">
    <text evidence="5">Expressed in shoots of 4 day old dark-grown seedlings.</text>
</comment>
<comment type="induction">
    <text evidence="4">Down-regulated by abscisic acid (ABA).</text>
</comment>
<comment type="miscellaneous">
    <molecule>Isoform 2</molecule>
    <text evidence="7">May be due to intron retention.</text>
</comment>
<comment type="similarity">
    <text evidence="7">Belongs to the tubulin family.</text>
</comment>
<feature type="chain" id="PRO_0000048365" description="Tubulin beta-3 chain">
    <location>
        <begin position="1"/>
        <end position="446"/>
    </location>
</feature>
<feature type="region of interest" description="Disordered" evidence="3">
    <location>
        <begin position="421"/>
        <end position="446"/>
    </location>
</feature>
<feature type="compositionally biased region" description="Acidic residues" evidence="3">
    <location>
        <begin position="429"/>
        <end position="446"/>
    </location>
</feature>
<feature type="binding site" evidence="2">
    <location>
        <position position="11"/>
    </location>
    <ligand>
        <name>GTP</name>
        <dbReference type="ChEBI" id="CHEBI:37565"/>
    </ligand>
</feature>
<feature type="binding site" evidence="1">
    <location>
        <position position="69"/>
    </location>
    <ligand>
        <name>GTP</name>
        <dbReference type="ChEBI" id="CHEBI:37565"/>
    </ligand>
</feature>
<feature type="binding site" evidence="1">
    <location>
        <position position="69"/>
    </location>
    <ligand>
        <name>Mg(2+)</name>
        <dbReference type="ChEBI" id="CHEBI:18420"/>
    </ligand>
</feature>
<feature type="binding site" evidence="2">
    <location>
        <position position="138"/>
    </location>
    <ligand>
        <name>GTP</name>
        <dbReference type="ChEBI" id="CHEBI:37565"/>
    </ligand>
</feature>
<feature type="binding site" evidence="2">
    <location>
        <position position="142"/>
    </location>
    <ligand>
        <name>GTP</name>
        <dbReference type="ChEBI" id="CHEBI:37565"/>
    </ligand>
</feature>
<feature type="binding site" evidence="2">
    <location>
        <position position="143"/>
    </location>
    <ligand>
        <name>GTP</name>
        <dbReference type="ChEBI" id="CHEBI:37565"/>
    </ligand>
</feature>
<feature type="binding site" evidence="2">
    <location>
        <position position="144"/>
    </location>
    <ligand>
        <name>GTP</name>
        <dbReference type="ChEBI" id="CHEBI:37565"/>
    </ligand>
</feature>
<feature type="binding site" evidence="2">
    <location>
        <position position="204"/>
    </location>
    <ligand>
        <name>GTP</name>
        <dbReference type="ChEBI" id="CHEBI:37565"/>
    </ligand>
</feature>
<feature type="binding site" evidence="2">
    <location>
        <position position="226"/>
    </location>
    <ligand>
        <name>GTP</name>
        <dbReference type="ChEBI" id="CHEBI:37565"/>
    </ligand>
</feature>
<feature type="splice variant" id="VSP_015369" description="In isoform 2." evidence="6">
    <location>
        <begin position="378"/>
        <end position="390"/>
    </location>
</feature>
<feature type="sequence conflict" description="In Ref. 1; AAA67322." evidence="7" ref="1">
    <original>Q</original>
    <variation>K</variation>
    <location>
        <position position="15"/>
    </location>
</feature>
<feature type="sequence conflict" description="In Ref. 1; AAA67322." evidence="7" ref="1">
    <original>E</original>
    <variation>V</variation>
    <location>
        <position position="45"/>
    </location>
</feature>
<feature type="sequence conflict" description="In Ref. 1; AAA67322." evidence="7" ref="1">
    <original>N</original>
    <variation>NN</variation>
    <location>
        <position position="52"/>
    </location>
</feature>
<feature type="sequence conflict" description="In Ref. 1; AAA67322." evidence="7" ref="1">
    <original>M</original>
    <variation>S</variation>
    <location>
        <position position="73"/>
    </location>
</feature>
<feature type="sequence conflict" description="In Ref. 1; AAA67322." evidence="7" ref="1">
    <original>S</original>
    <variation>Y</variation>
    <location>
        <position position="176"/>
    </location>
</feature>
<feature type="sequence conflict" description="In Ref. 1; AAA67322." evidence="7" ref="1">
    <original>SV</original>
    <variation>C</variation>
    <location>
        <begin position="188"/>
        <end position="189"/>
    </location>
</feature>
<feature type="sequence conflict" description="In Ref. 1; AAA67322." evidence="7" ref="1">
    <original>L</original>
    <variation>R</variation>
    <location>
        <position position="202"/>
    </location>
</feature>
<feature type="sequence conflict" description="In Ref. 1; AAA67322." evidence="7" ref="1">
    <original>I</original>
    <variation>M</variation>
    <location>
        <position position="210"/>
    </location>
</feature>
<feature type="sequence conflict" description="In Ref. 1; AAA67322." evidence="7" ref="1">
    <original>R</original>
    <variation>W</variation>
    <location>
        <position position="391"/>
    </location>
</feature>
<feature type="sequence conflict" description="In Ref. 1; AAA67322." evidence="7" ref="1">
    <original>D</original>
    <variation>DPG</variation>
    <location>
        <position position="417"/>
    </location>
</feature>
<evidence type="ECO:0000250" key="1">
    <source>
        <dbReference type="UniProtKB" id="P68363"/>
    </source>
</evidence>
<evidence type="ECO:0000250" key="2">
    <source>
        <dbReference type="UniProtKB" id="Q13509"/>
    </source>
</evidence>
<evidence type="ECO:0000256" key="3">
    <source>
        <dbReference type="SAM" id="MobiDB-lite"/>
    </source>
</evidence>
<evidence type="ECO:0000269" key="4">
    <source>
    </source>
</evidence>
<evidence type="ECO:0000269" key="5">
    <source>
    </source>
</evidence>
<evidence type="ECO:0000303" key="6">
    <source>
    </source>
</evidence>
<evidence type="ECO:0000305" key="7"/>
<evidence type="ECO:0000312" key="8">
    <source>
        <dbReference type="EMBL" id="EAZ37984.1"/>
    </source>
</evidence>
<protein>
    <recommendedName>
        <fullName>Tubulin beta-3 chain</fullName>
    </recommendedName>
    <alternativeName>
        <fullName>Beta-3-tubulin</fullName>
    </alternativeName>
</protein>
<name>TBB3_ORYSJ</name>
<gene>
    <name type="primary">TUBB3</name>
    <name type="synonym">RTUB-2</name>
    <name type="synonym">TUB3</name>
    <name type="ordered locus">Os06g0671900</name>
    <name type="ordered locus">LOC_Os06g46000</name>
    <name evidence="8" type="ORF">OsJ_22330</name>
    <name type="ORF">OSJNBa0032M14.15</name>
    <name type="ORF">P0485A07.25</name>
</gene>
<accession>Q40665</accession>
<accession>A3BEJ5</accession>
<accession>Q652I6</accession>
<proteinExistence type="evidence at transcript level"/>
<dbReference type="EMBL" id="L33263">
    <property type="protein sequence ID" value="AAA67322.1"/>
    <property type="molecule type" value="mRNA"/>
</dbReference>
<dbReference type="EMBL" id="AP005192">
    <property type="protein sequence ID" value="BAD46004.1"/>
    <property type="molecule type" value="Genomic_DNA"/>
</dbReference>
<dbReference type="EMBL" id="AP005610">
    <property type="protein sequence ID" value="BAD46281.1"/>
    <property type="molecule type" value="Genomic_DNA"/>
</dbReference>
<dbReference type="EMBL" id="AP014962">
    <property type="protein sequence ID" value="BAS99085.1"/>
    <property type="molecule type" value="Genomic_DNA"/>
</dbReference>
<dbReference type="EMBL" id="CM000143">
    <property type="protein sequence ID" value="EAZ37984.1"/>
    <property type="molecule type" value="Genomic_DNA"/>
</dbReference>
<dbReference type="EMBL" id="AK069237">
    <property type="protein sequence ID" value="BAG91329.1"/>
    <property type="molecule type" value="mRNA"/>
</dbReference>
<dbReference type="PIR" id="S52008">
    <property type="entry name" value="S52008"/>
</dbReference>
<dbReference type="RefSeq" id="XP_015643315.1">
    <property type="nucleotide sequence ID" value="XM_015787829.1"/>
</dbReference>
<dbReference type="SMR" id="Q40665"/>
<dbReference type="FunCoup" id="Q40665">
    <property type="interactions" value="1675"/>
</dbReference>
<dbReference type="STRING" id="39947.Q40665"/>
<dbReference type="PaxDb" id="39947-Q40665"/>
<dbReference type="EnsemblPlants" id="Os06t0671900-01">
    <molecule id="Q40665-1"/>
    <property type="protein sequence ID" value="Os06t0671900-01"/>
    <property type="gene ID" value="Os06g0671900"/>
</dbReference>
<dbReference type="Gramene" id="Os06t0671900-01">
    <molecule id="Q40665-1"/>
    <property type="protein sequence ID" value="Os06t0671900-01"/>
    <property type="gene ID" value="Os06g0671900"/>
</dbReference>
<dbReference type="eggNOG" id="KOG1375">
    <property type="taxonomic scope" value="Eukaryota"/>
</dbReference>
<dbReference type="HOGENOM" id="CLU_015718_1_1_1"/>
<dbReference type="InParanoid" id="Q40665"/>
<dbReference type="OMA" id="CQDEMEG"/>
<dbReference type="OrthoDB" id="732292at2759"/>
<dbReference type="Proteomes" id="UP000000763">
    <property type="component" value="Chromosome 6"/>
</dbReference>
<dbReference type="Proteomes" id="UP000007752">
    <property type="component" value="Chromosome 6"/>
</dbReference>
<dbReference type="Proteomes" id="UP000059680">
    <property type="component" value="Chromosome 6"/>
</dbReference>
<dbReference type="GO" id="GO:0005737">
    <property type="term" value="C:cytoplasm"/>
    <property type="evidence" value="ECO:0000318"/>
    <property type="project" value="GO_Central"/>
</dbReference>
<dbReference type="GO" id="GO:0005874">
    <property type="term" value="C:microtubule"/>
    <property type="evidence" value="ECO:0000318"/>
    <property type="project" value="GO_Central"/>
</dbReference>
<dbReference type="GO" id="GO:0005525">
    <property type="term" value="F:GTP binding"/>
    <property type="evidence" value="ECO:0000318"/>
    <property type="project" value="GO_Central"/>
</dbReference>
<dbReference type="GO" id="GO:0003924">
    <property type="term" value="F:GTPase activity"/>
    <property type="evidence" value="ECO:0007669"/>
    <property type="project" value="InterPro"/>
</dbReference>
<dbReference type="GO" id="GO:0046872">
    <property type="term" value="F:metal ion binding"/>
    <property type="evidence" value="ECO:0007669"/>
    <property type="project" value="UniProtKB-KW"/>
</dbReference>
<dbReference type="GO" id="GO:0005200">
    <property type="term" value="F:structural constituent of cytoskeleton"/>
    <property type="evidence" value="ECO:0000318"/>
    <property type="project" value="GO_Central"/>
</dbReference>
<dbReference type="GO" id="GO:0000226">
    <property type="term" value="P:microtubule cytoskeleton organization"/>
    <property type="evidence" value="ECO:0000318"/>
    <property type="project" value="GO_Central"/>
</dbReference>
<dbReference type="GO" id="GO:0000278">
    <property type="term" value="P:mitotic cell cycle"/>
    <property type="evidence" value="ECO:0000318"/>
    <property type="project" value="GO_Central"/>
</dbReference>
<dbReference type="CDD" id="cd02187">
    <property type="entry name" value="beta_tubulin"/>
    <property type="match status" value="1"/>
</dbReference>
<dbReference type="FunFam" id="1.10.287.600:FF:000002">
    <property type="entry name" value="Tubulin beta chain"/>
    <property type="match status" value="1"/>
</dbReference>
<dbReference type="FunFam" id="3.30.1330.20:FF:000002">
    <property type="entry name" value="Tubulin beta chain"/>
    <property type="match status" value="1"/>
</dbReference>
<dbReference type="FunFam" id="3.40.50.1440:FF:000005">
    <property type="entry name" value="Tubulin beta chain"/>
    <property type="match status" value="1"/>
</dbReference>
<dbReference type="Gene3D" id="1.10.287.600">
    <property type="entry name" value="Helix hairpin bin"/>
    <property type="match status" value="1"/>
</dbReference>
<dbReference type="Gene3D" id="3.30.1330.20">
    <property type="entry name" value="Tubulin/FtsZ, C-terminal domain"/>
    <property type="match status" value="1"/>
</dbReference>
<dbReference type="Gene3D" id="3.40.50.1440">
    <property type="entry name" value="Tubulin/FtsZ, GTPase domain"/>
    <property type="match status" value="1"/>
</dbReference>
<dbReference type="InterPro" id="IPR013838">
    <property type="entry name" value="Beta-tubulin_BS"/>
</dbReference>
<dbReference type="InterPro" id="IPR002453">
    <property type="entry name" value="Beta_tubulin"/>
</dbReference>
<dbReference type="InterPro" id="IPR008280">
    <property type="entry name" value="Tub_FtsZ_C"/>
</dbReference>
<dbReference type="InterPro" id="IPR000217">
    <property type="entry name" value="Tubulin"/>
</dbReference>
<dbReference type="InterPro" id="IPR037103">
    <property type="entry name" value="Tubulin/FtsZ-like_C"/>
</dbReference>
<dbReference type="InterPro" id="IPR018316">
    <property type="entry name" value="Tubulin/FtsZ_2-layer-sand-dom"/>
</dbReference>
<dbReference type="InterPro" id="IPR036525">
    <property type="entry name" value="Tubulin/FtsZ_GTPase_sf"/>
</dbReference>
<dbReference type="InterPro" id="IPR023123">
    <property type="entry name" value="Tubulin_C"/>
</dbReference>
<dbReference type="InterPro" id="IPR017975">
    <property type="entry name" value="Tubulin_CS"/>
</dbReference>
<dbReference type="InterPro" id="IPR003008">
    <property type="entry name" value="Tubulin_FtsZ_GTPase"/>
</dbReference>
<dbReference type="PANTHER" id="PTHR11588">
    <property type="entry name" value="TUBULIN"/>
    <property type="match status" value="1"/>
</dbReference>
<dbReference type="Pfam" id="PF00091">
    <property type="entry name" value="Tubulin"/>
    <property type="match status" value="1"/>
</dbReference>
<dbReference type="Pfam" id="PF03953">
    <property type="entry name" value="Tubulin_C"/>
    <property type="match status" value="1"/>
</dbReference>
<dbReference type="PRINTS" id="PR01163">
    <property type="entry name" value="BETATUBULIN"/>
</dbReference>
<dbReference type="PRINTS" id="PR01161">
    <property type="entry name" value="TUBULIN"/>
</dbReference>
<dbReference type="SMART" id="SM00864">
    <property type="entry name" value="Tubulin"/>
    <property type="match status" value="1"/>
</dbReference>
<dbReference type="SMART" id="SM00865">
    <property type="entry name" value="Tubulin_C"/>
    <property type="match status" value="1"/>
</dbReference>
<dbReference type="SUPFAM" id="SSF55307">
    <property type="entry name" value="Tubulin C-terminal domain-like"/>
    <property type="match status" value="1"/>
</dbReference>
<dbReference type="SUPFAM" id="SSF52490">
    <property type="entry name" value="Tubulin nucleotide-binding domain-like"/>
    <property type="match status" value="1"/>
</dbReference>
<dbReference type="PROSITE" id="PS00227">
    <property type="entry name" value="TUBULIN"/>
    <property type="match status" value="1"/>
</dbReference>
<dbReference type="PROSITE" id="PS00228">
    <property type="entry name" value="TUBULIN_B_AUTOREG"/>
    <property type="match status" value="1"/>
</dbReference>
<reference key="1">
    <citation type="journal article" date="1994" name="Plant Mol. Biol.">
        <title>Isolation and characterization of two beta-tubulin cDNA clones from rice.</title>
        <authorList>
            <person name="Kang M.S."/>
            <person name="Choi Y.J."/>
            <person name="Kim M.C."/>
            <person name="Lim C.O."/>
            <person name="Hwang I."/>
            <person name="Cho M.J."/>
        </authorList>
    </citation>
    <scope>NUCLEOTIDE SEQUENCE [MRNA] (ISOFORM 2)</scope>
    <scope>DEVELOPMENTAL STAGE</scope>
    <source>
        <tissue>Leaf</tissue>
    </source>
</reference>
<reference key="2">
    <citation type="journal article" date="2005" name="Nature">
        <title>The map-based sequence of the rice genome.</title>
        <authorList>
            <consortium name="International rice genome sequencing project (IRGSP)"/>
        </authorList>
    </citation>
    <scope>NUCLEOTIDE SEQUENCE [LARGE SCALE GENOMIC DNA]</scope>
    <source>
        <strain>cv. Nipponbare</strain>
    </source>
</reference>
<reference key="3">
    <citation type="journal article" date="2013" name="Rice">
        <title>Improvement of the Oryza sativa Nipponbare reference genome using next generation sequence and optical map data.</title>
        <authorList>
            <person name="Kawahara Y."/>
            <person name="de la Bastide M."/>
            <person name="Hamilton J.P."/>
            <person name="Kanamori H."/>
            <person name="McCombie W.R."/>
            <person name="Ouyang S."/>
            <person name="Schwartz D.C."/>
            <person name="Tanaka T."/>
            <person name="Wu J."/>
            <person name="Zhou S."/>
            <person name="Childs K.L."/>
            <person name="Davidson R.M."/>
            <person name="Lin H."/>
            <person name="Quesada-Ocampo L."/>
            <person name="Vaillancourt B."/>
            <person name="Sakai H."/>
            <person name="Lee S.S."/>
            <person name="Kim J."/>
            <person name="Numa H."/>
            <person name="Itoh T."/>
            <person name="Buell C.R."/>
            <person name="Matsumoto T."/>
        </authorList>
    </citation>
    <scope>GENOME REANNOTATION</scope>
    <source>
        <strain>cv. Nipponbare</strain>
    </source>
</reference>
<reference key="4">
    <citation type="journal article" date="2005" name="PLoS Biol.">
        <title>The genomes of Oryza sativa: a history of duplications.</title>
        <authorList>
            <person name="Yu J."/>
            <person name="Wang J."/>
            <person name="Lin W."/>
            <person name="Li S."/>
            <person name="Li H."/>
            <person name="Zhou J."/>
            <person name="Ni P."/>
            <person name="Dong W."/>
            <person name="Hu S."/>
            <person name="Zeng C."/>
            <person name="Zhang J."/>
            <person name="Zhang Y."/>
            <person name="Li R."/>
            <person name="Xu Z."/>
            <person name="Li S."/>
            <person name="Li X."/>
            <person name="Zheng H."/>
            <person name="Cong L."/>
            <person name="Lin L."/>
            <person name="Yin J."/>
            <person name="Geng J."/>
            <person name="Li G."/>
            <person name="Shi J."/>
            <person name="Liu J."/>
            <person name="Lv H."/>
            <person name="Li J."/>
            <person name="Wang J."/>
            <person name="Deng Y."/>
            <person name="Ran L."/>
            <person name="Shi X."/>
            <person name="Wang X."/>
            <person name="Wu Q."/>
            <person name="Li C."/>
            <person name="Ren X."/>
            <person name="Wang J."/>
            <person name="Wang X."/>
            <person name="Li D."/>
            <person name="Liu D."/>
            <person name="Zhang X."/>
            <person name="Ji Z."/>
            <person name="Zhao W."/>
            <person name="Sun Y."/>
            <person name="Zhang Z."/>
            <person name="Bao J."/>
            <person name="Han Y."/>
            <person name="Dong L."/>
            <person name="Ji J."/>
            <person name="Chen P."/>
            <person name="Wu S."/>
            <person name="Liu J."/>
            <person name="Xiao Y."/>
            <person name="Bu D."/>
            <person name="Tan J."/>
            <person name="Yang L."/>
            <person name="Ye C."/>
            <person name="Zhang J."/>
            <person name="Xu J."/>
            <person name="Zhou Y."/>
            <person name="Yu Y."/>
            <person name="Zhang B."/>
            <person name="Zhuang S."/>
            <person name="Wei H."/>
            <person name="Liu B."/>
            <person name="Lei M."/>
            <person name="Yu H."/>
            <person name="Li Y."/>
            <person name="Xu H."/>
            <person name="Wei S."/>
            <person name="He X."/>
            <person name="Fang L."/>
            <person name="Zhang Z."/>
            <person name="Zhang Y."/>
            <person name="Huang X."/>
            <person name="Su Z."/>
            <person name="Tong W."/>
            <person name="Li J."/>
            <person name="Tong Z."/>
            <person name="Li S."/>
            <person name="Ye J."/>
            <person name="Wang L."/>
            <person name="Fang L."/>
            <person name="Lei T."/>
            <person name="Chen C.-S."/>
            <person name="Chen H.-C."/>
            <person name="Xu Z."/>
            <person name="Li H."/>
            <person name="Huang H."/>
            <person name="Zhang F."/>
            <person name="Xu H."/>
            <person name="Li N."/>
            <person name="Zhao C."/>
            <person name="Li S."/>
            <person name="Dong L."/>
            <person name="Huang Y."/>
            <person name="Li L."/>
            <person name="Xi Y."/>
            <person name="Qi Q."/>
            <person name="Li W."/>
            <person name="Zhang B."/>
            <person name="Hu W."/>
            <person name="Zhang Y."/>
            <person name="Tian X."/>
            <person name="Jiao Y."/>
            <person name="Liang X."/>
            <person name="Jin J."/>
            <person name="Gao L."/>
            <person name="Zheng W."/>
            <person name="Hao B."/>
            <person name="Liu S.-M."/>
            <person name="Wang W."/>
            <person name="Yuan L."/>
            <person name="Cao M."/>
            <person name="McDermott J."/>
            <person name="Samudrala R."/>
            <person name="Wang J."/>
            <person name="Wong G.K.-S."/>
            <person name="Yang H."/>
        </authorList>
    </citation>
    <scope>NUCLEOTIDE SEQUENCE [LARGE SCALE GENOMIC DNA]</scope>
    <source>
        <strain>cv. Nipponbare</strain>
    </source>
</reference>
<reference key="5">
    <citation type="journal article" date="2003" name="Science">
        <title>Collection, mapping, and annotation of over 28,000 cDNA clones from japonica rice.</title>
        <authorList>
            <consortium name="The rice full-length cDNA consortium"/>
        </authorList>
    </citation>
    <scope>NUCLEOTIDE SEQUENCE [LARGE SCALE MRNA] (ISOFORM 1)</scope>
    <source>
        <strain>cv. Nipponbare</strain>
    </source>
</reference>
<reference key="6">
    <citation type="journal article" date="2003" name="Plant Cell Physiol.">
        <title>Expression analyses of beta-tubulin isotype genes in rice.</title>
        <authorList>
            <person name="Yoshikawa M."/>
            <person name="Yang G."/>
            <person name="Kawaguchi K."/>
            <person name="Komatsu S."/>
        </authorList>
    </citation>
    <scope>TISSUE SPECIFICITY</scope>
    <scope>INDUCTION</scope>
    <scope>NOMENCLATURE</scope>
</reference>
<organism>
    <name type="scientific">Oryza sativa subsp. japonica</name>
    <name type="common">Rice</name>
    <dbReference type="NCBI Taxonomy" id="39947"/>
    <lineage>
        <taxon>Eukaryota</taxon>
        <taxon>Viridiplantae</taxon>
        <taxon>Streptophyta</taxon>
        <taxon>Embryophyta</taxon>
        <taxon>Tracheophyta</taxon>
        <taxon>Spermatophyta</taxon>
        <taxon>Magnoliopsida</taxon>
        <taxon>Liliopsida</taxon>
        <taxon>Poales</taxon>
        <taxon>Poaceae</taxon>
        <taxon>BOP clade</taxon>
        <taxon>Oryzoideae</taxon>
        <taxon>Oryzeae</taxon>
        <taxon>Oryzinae</taxon>
        <taxon>Oryza</taxon>
        <taxon>Oryza sativa</taxon>
    </lineage>
</organism>
<sequence length="446" mass="50121">MREILHIQGGQCGNQIGAKFWEVICDEHGIDHTGKYSGDSDLQLERINVYYNEASGGRYVPRAVLMDLEPGTMDSVRSGPYGQIFRPDNFVFGQSGAGNNWAKGHYTEGAELIDSVLDVVRKEAENCDCLQGFQVCHSLGGGTGSGMGTLLISKIREEYPDRMMLTFSVFPSPKVSDTVVEPYNATLSVHQLVENADECMVLDNEALYDICFRTLKLATPTFGDLNHLISATMSGVTCCLRFPGQLNSDLRKLAVNLIPFPRLHFFMVGFAPLTSRGSQQYRALTVPELTQQMWDAKNMMCAADPRHGRYLTASAMFRGKMSTKEVDEQMLNVQNKNSSYFVEWIPNNVKSSVCDIPPIGLKMASTFIGNSTSIQEMFRRVSEQFTAMFRRKAFLHWYTGEGMDEMEFTEAESNMNDLVAEYQQYQDATAEEEDYEEEEEDEEVAA</sequence>